<keyword id="KW-1185">Reference proteome</keyword>
<dbReference type="EMBL" id="AE014075">
    <property type="protein sequence ID" value="AAN80198.1"/>
    <property type="status" value="ALT_INIT"/>
    <property type="molecule type" value="Genomic_DNA"/>
</dbReference>
<dbReference type="RefSeq" id="WP_001295575.1">
    <property type="nucleotide sequence ID" value="NZ_CP051263.1"/>
</dbReference>
<dbReference type="SMR" id="P0AFR5"/>
<dbReference type="STRING" id="199310.c1732"/>
<dbReference type="KEGG" id="ecc:c1732"/>
<dbReference type="eggNOG" id="COG0009">
    <property type="taxonomic scope" value="Bacteria"/>
</dbReference>
<dbReference type="HOGENOM" id="CLU_031397_3_0_6"/>
<dbReference type="Proteomes" id="UP000001410">
    <property type="component" value="Chromosome"/>
</dbReference>
<dbReference type="GO" id="GO:0003725">
    <property type="term" value="F:double-stranded RNA binding"/>
    <property type="evidence" value="ECO:0007669"/>
    <property type="project" value="InterPro"/>
</dbReference>
<dbReference type="FunFam" id="3.90.870.10:FF:000003">
    <property type="entry name" value="Sua5/YciO/YrdC/YwlC family protein"/>
    <property type="match status" value="1"/>
</dbReference>
<dbReference type="Gene3D" id="3.90.870.10">
    <property type="entry name" value="DHBP synthase"/>
    <property type="match status" value="1"/>
</dbReference>
<dbReference type="InterPro" id="IPR017945">
    <property type="entry name" value="DHBP_synth_RibB-like_a/b_dom"/>
</dbReference>
<dbReference type="InterPro" id="IPR006070">
    <property type="entry name" value="Sua5-like_dom"/>
</dbReference>
<dbReference type="InterPro" id="IPR052532">
    <property type="entry name" value="SUA5_domain"/>
</dbReference>
<dbReference type="NCBIfam" id="TIGR00057">
    <property type="entry name" value="L-threonylcarbamoyladenylate synthase"/>
    <property type="match status" value="1"/>
</dbReference>
<dbReference type="PANTHER" id="PTHR42828">
    <property type="entry name" value="DHBP SYNTHASE RIBB-LIKE ALPHA/BETA DOMAIN-CONTAINING PROTEIN"/>
    <property type="match status" value="1"/>
</dbReference>
<dbReference type="PANTHER" id="PTHR42828:SF3">
    <property type="entry name" value="THREONYLCARBAMOYL-AMP SYNTHASE"/>
    <property type="match status" value="1"/>
</dbReference>
<dbReference type="Pfam" id="PF01300">
    <property type="entry name" value="Sua5_yciO_yrdC"/>
    <property type="match status" value="1"/>
</dbReference>
<dbReference type="SUPFAM" id="SSF55821">
    <property type="entry name" value="YrdC/RibB"/>
    <property type="match status" value="1"/>
</dbReference>
<dbReference type="PROSITE" id="PS51163">
    <property type="entry name" value="YRDC"/>
    <property type="match status" value="1"/>
</dbReference>
<evidence type="ECO:0000255" key="1">
    <source>
        <dbReference type="PROSITE-ProRule" id="PRU00518"/>
    </source>
</evidence>
<evidence type="ECO:0000305" key="2"/>
<feature type="chain" id="PRO_0000202015" description="Uncharacterized protein YciO">
    <location>
        <begin position="1"/>
        <end position="206"/>
    </location>
</feature>
<feature type="domain" description="YrdC-like" evidence="1">
    <location>
        <begin position="14"/>
        <end position="200"/>
    </location>
</feature>
<name>YCIO_ECOL6</name>
<organism>
    <name type="scientific">Escherichia coli O6:H1 (strain CFT073 / ATCC 700928 / UPEC)</name>
    <dbReference type="NCBI Taxonomy" id="199310"/>
    <lineage>
        <taxon>Bacteria</taxon>
        <taxon>Pseudomonadati</taxon>
        <taxon>Pseudomonadota</taxon>
        <taxon>Gammaproteobacteria</taxon>
        <taxon>Enterobacterales</taxon>
        <taxon>Enterobacteriaceae</taxon>
        <taxon>Escherichia</taxon>
    </lineage>
</organism>
<sequence>MSQFFYIHPDNPQQRLINQAVEIVRKGGVIVYPTDSGYALGCKIEDKNAMERICRIRQLPDGHNFTLMCRDLSELSTYSFVDNVAFRLMKNNTPGNYTFILKGTKEVPRRLLQEKRKTIGMRVPSNPIAQALLEALGEPMLSTSLMLPGSEFTESDPEEIKDRLEKQVDLIIHGGYLGQKPTTVIDLTDDTPVVVREGVGDVKPFL</sequence>
<gene>
    <name type="primary">yciO</name>
    <name type="ordered locus">c1732</name>
</gene>
<proteinExistence type="inferred from homology"/>
<accession>P0AFR5</accession>
<accession>P45847</accession>
<comment type="similarity">
    <text evidence="2">Belongs to the SUA5 family.</text>
</comment>
<comment type="sequence caution" evidence="2">
    <conflict type="erroneous initiation">
        <sequence resource="EMBL-CDS" id="AAN80198"/>
    </conflict>
</comment>
<reference key="1">
    <citation type="journal article" date="2002" name="Proc. Natl. Acad. Sci. U.S.A.">
        <title>Extensive mosaic structure revealed by the complete genome sequence of uropathogenic Escherichia coli.</title>
        <authorList>
            <person name="Welch R.A."/>
            <person name="Burland V."/>
            <person name="Plunkett G. III"/>
            <person name="Redford P."/>
            <person name="Roesch P."/>
            <person name="Rasko D."/>
            <person name="Buckles E.L."/>
            <person name="Liou S.-R."/>
            <person name="Boutin A."/>
            <person name="Hackett J."/>
            <person name="Stroud D."/>
            <person name="Mayhew G.F."/>
            <person name="Rose D.J."/>
            <person name="Zhou S."/>
            <person name="Schwartz D.C."/>
            <person name="Perna N.T."/>
            <person name="Mobley H.L.T."/>
            <person name="Donnenberg M.S."/>
            <person name="Blattner F.R."/>
        </authorList>
    </citation>
    <scope>NUCLEOTIDE SEQUENCE [LARGE SCALE GENOMIC DNA]</scope>
    <source>
        <strain>CFT073 / ATCC 700928 / UPEC</strain>
    </source>
</reference>
<protein>
    <recommendedName>
        <fullName>Uncharacterized protein YciO</fullName>
    </recommendedName>
</protein>